<reference key="1">
    <citation type="journal article" date="2008" name="Proc. Natl. Acad. Sci. U.S.A.">
        <title>The genome of Clostridium kluyveri, a strict anaerobe with unique metabolic features.</title>
        <authorList>
            <person name="Seedorf H."/>
            <person name="Fricke W.F."/>
            <person name="Veith B."/>
            <person name="Brueggemann H."/>
            <person name="Liesegang H."/>
            <person name="Strittmatter A."/>
            <person name="Miethke M."/>
            <person name="Buckel W."/>
            <person name="Hinderberger J."/>
            <person name="Li F."/>
            <person name="Hagemeier C."/>
            <person name="Thauer R.K."/>
            <person name="Gottschalk G."/>
        </authorList>
    </citation>
    <scope>NUCLEOTIDE SEQUENCE [LARGE SCALE GENOMIC DNA]</scope>
    <source>
        <strain>ATCC 8527 / DSM 555 / NBRC 12016 / NCIMB 10680 / K1</strain>
    </source>
</reference>
<evidence type="ECO:0000255" key="1">
    <source>
        <dbReference type="HAMAP-Rule" id="MF_00006"/>
    </source>
</evidence>
<feature type="chain" id="PRO_1000073843" description="Argininosuccinate lyase">
    <location>
        <begin position="1"/>
        <end position="438"/>
    </location>
</feature>
<dbReference type="EC" id="4.3.2.1" evidence="1"/>
<dbReference type="EMBL" id="CP000673">
    <property type="protein sequence ID" value="EDK33024.1"/>
    <property type="molecule type" value="Genomic_DNA"/>
</dbReference>
<dbReference type="RefSeq" id="WP_012101354.1">
    <property type="nucleotide sequence ID" value="NC_009706.1"/>
</dbReference>
<dbReference type="SMR" id="A5N6U3"/>
<dbReference type="STRING" id="431943.CKL_0982"/>
<dbReference type="KEGG" id="ckl:CKL_0982"/>
<dbReference type="eggNOG" id="COG0165">
    <property type="taxonomic scope" value="Bacteria"/>
</dbReference>
<dbReference type="HOGENOM" id="CLU_027272_2_3_9"/>
<dbReference type="UniPathway" id="UPA00068">
    <property type="reaction ID" value="UER00114"/>
</dbReference>
<dbReference type="Proteomes" id="UP000002411">
    <property type="component" value="Chromosome"/>
</dbReference>
<dbReference type="GO" id="GO:0005829">
    <property type="term" value="C:cytosol"/>
    <property type="evidence" value="ECO:0007669"/>
    <property type="project" value="TreeGrafter"/>
</dbReference>
<dbReference type="GO" id="GO:0004056">
    <property type="term" value="F:argininosuccinate lyase activity"/>
    <property type="evidence" value="ECO:0007669"/>
    <property type="project" value="UniProtKB-UniRule"/>
</dbReference>
<dbReference type="GO" id="GO:0042450">
    <property type="term" value="P:arginine biosynthetic process via ornithine"/>
    <property type="evidence" value="ECO:0007669"/>
    <property type="project" value="InterPro"/>
</dbReference>
<dbReference type="GO" id="GO:0006526">
    <property type="term" value="P:L-arginine biosynthetic process"/>
    <property type="evidence" value="ECO:0007669"/>
    <property type="project" value="UniProtKB-UniRule"/>
</dbReference>
<dbReference type="CDD" id="cd01359">
    <property type="entry name" value="Argininosuccinate_lyase"/>
    <property type="match status" value="1"/>
</dbReference>
<dbReference type="FunFam" id="1.10.275.10:FF:000002">
    <property type="entry name" value="Argininosuccinate lyase"/>
    <property type="match status" value="1"/>
</dbReference>
<dbReference type="FunFam" id="1.10.40.30:FF:000001">
    <property type="entry name" value="Argininosuccinate lyase"/>
    <property type="match status" value="1"/>
</dbReference>
<dbReference type="FunFam" id="1.20.200.10:FF:000002">
    <property type="entry name" value="Argininosuccinate lyase"/>
    <property type="match status" value="1"/>
</dbReference>
<dbReference type="Gene3D" id="1.10.40.30">
    <property type="entry name" value="Fumarase/aspartase (C-terminal domain)"/>
    <property type="match status" value="1"/>
</dbReference>
<dbReference type="Gene3D" id="1.20.200.10">
    <property type="entry name" value="Fumarase/aspartase (Central domain)"/>
    <property type="match status" value="1"/>
</dbReference>
<dbReference type="Gene3D" id="1.10.275.10">
    <property type="entry name" value="Fumarase/aspartase (N-terminal domain)"/>
    <property type="match status" value="1"/>
</dbReference>
<dbReference type="HAMAP" id="MF_00006">
    <property type="entry name" value="Arg_succ_lyase"/>
    <property type="match status" value="1"/>
</dbReference>
<dbReference type="InterPro" id="IPR029419">
    <property type="entry name" value="Arg_succ_lyase_C"/>
</dbReference>
<dbReference type="InterPro" id="IPR009049">
    <property type="entry name" value="Argininosuccinate_lyase"/>
</dbReference>
<dbReference type="InterPro" id="IPR024083">
    <property type="entry name" value="Fumarase/histidase_N"/>
</dbReference>
<dbReference type="InterPro" id="IPR020557">
    <property type="entry name" value="Fumarate_lyase_CS"/>
</dbReference>
<dbReference type="InterPro" id="IPR000362">
    <property type="entry name" value="Fumarate_lyase_fam"/>
</dbReference>
<dbReference type="InterPro" id="IPR022761">
    <property type="entry name" value="Fumarate_lyase_N"/>
</dbReference>
<dbReference type="InterPro" id="IPR008948">
    <property type="entry name" value="L-Aspartase-like"/>
</dbReference>
<dbReference type="NCBIfam" id="TIGR00838">
    <property type="entry name" value="argH"/>
    <property type="match status" value="1"/>
</dbReference>
<dbReference type="PANTHER" id="PTHR43814">
    <property type="entry name" value="ARGININOSUCCINATE LYASE"/>
    <property type="match status" value="1"/>
</dbReference>
<dbReference type="PANTHER" id="PTHR43814:SF1">
    <property type="entry name" value="ARGININOSUCCINATE LYASE"/>
    <property type="match status" value="1"/>
</dbReference>
<dbReference type="Pfam" id="PF14698">
    <property type="entry name" value="ASL_C2"/>
    <property type="match status" value="1"/>
</dbReference>
<dbReference type="Pfam" id="PF00206">
    <property type="entry name" value="Lyase_1"/>
    <property type="match status" value="1"/>
</dbReference>
<dbReference type="PRINTS" id="PR00145">
    <property type="entry name" value="ARGSUCLYASE"/>
</dbReference>
<dbReference type="PRINTS" id="PR00149">
    <property type="entry name" value="FUMRATELYASE"/>
</dbReference>
<dbReference type="SUPFAM" id="SSF48557">
    <property type="entry name" value="L-aspartase-like"/>
    <property type="match status" value="1"/>
</dbReference>
<dbReference type="PROSITE" id="PS00163">
    <property type="entry name" value="FUMARATE_LYASES"/>
    <property type="match status" value="1"/>
</dbReference>
<comment type="catalytic activity">
    <reaction evidence="1">
        <text>2-(N(omega)-L-arginino)succinate = fumarate + L-arginine</text>
        <dbReference type="Rhea" id="RHEA:24020"/>
        <dbReference type="ChEBI" id="CHEBI:29806"/>
        <dbReference type="ChEBI" id="CHEBI:32682"/>
        <dbReference type="ChEBI" id="CHEBI:57472"/>
        <dbReference type="EC" id="4.3.2.1"/>
    </reaction>
</comment>
<comment type="pathway">
    <text evidence="1">Amino-acid biosynthesis; L-arginine biosynthesis; L-arginine from L-ornithine and carbamoyl phosphate: step 3/3.</text>
</comment>
<comment type="subcellular location">
    <subcellularLocation>
        <location evidence="1">Cytoplasm</location>
    </subcellularLocation>
</comment>
<comment type="similarity">
    <text evidence="1">Belongs to the lyase 1 family. Argininosuccinate lyase subfamily.</text>
</comment>
<sequence>MKLWGGRFKKSESKLMEDFNSSLSFDRQLYKEDIEGSMVHVKMLAKCNILSSEESKAILSGLESILKDIEEGKLEVEGDYEDIHSFVEINLIERIGQVAKKLHTARSRNDQVALDFRLYAKRKALEVVENIEYLQDVIENLGDKNNVIMPGYTHLQRAQVVTFKHHIMAYYHMFKRDRERILNAICIMDESPLGCCALAGTTYNIDRNFTAQELGFKKPVDNFLDGVSDRDYVIELISDFSIIMMHLSRLSEELILWSSKEFDFIRIDDEFSTGSSIMPQKKNPDAAELIRGKTGRVYGSLVSLLTTMKGIPLAYNKDMQEDKEQLFNSLDTVLSCLKIMSGMLSTLKVNEKNTFNAVKKGFLNATEAADYLVNKGMAFRDAHKVIGEIVLYCEDKNRAIEDISLDELKKFSSLFEEDVYDFIDYENTINRGIKRNLK</sequence>
<organism>
    <name type="scientific">Clostridium kluyveri (strain ATCC 8527 / DSM 555 / NBRC 12016 / NCIMB 10680 / K1)</name>
    <dbReference type="NCBI Taxonomy" id="431943"/>
    <lineage>
        <taxon>Bacteria</taxon>
        <taxon>Bacillati</taxon>
        <taxon>Bacillota</taxon>
        <taxon>Clostridia</taxon>
        <taxon>Eubacteriales</taxon>
        <taxon>Clostridiaceae</taxon>
        <taxon>Clostridium</taxon>
    </lineage>
</organism>
<proteinExistence type="inferred from homology"/>
<accession>A5N6U3</accession>
<name>ARLY_CLOK5</name>
<keyword id="KW-0028">Amino-acid biosynthesis</keyword>
<keyword id="KW-0055">Arginine biosynthesis</keyword>
<keyword id="KW-0963">Cytoplasm</keyword>
<keyword id="KW-0456">Lyase</keyword>
<keyword id="KW-1185">Reference proteome</keyword>
<gene>
    <name evidence="1" type="primary">argH</name>
    <name type="ordered locus">CKL_0982</name>
</gene>
<protein>
    <recommendedName>
        <fullName evidence="1">Argininosuccinate lyase</fullName>
        <shortName evidence="1">ASAL</shortName>
        <ecNumber evidence="1">4.3.2.1</ecNumber>
    </recommendedName>
    <alternativeName>
        <fullName evidence="1">Arginosuccinase</fullName>
    </alternativeName>
</protein>